<proteinExistence type="inferred from homology"/>
<keyword id="KW-1015">Disulfide bond</keyword>
<keyword id="KW-0249">Electron transport</keyword>
<keyword id="KW-0676">Redox-active center</keyword>
<keyword id="KW-0813">Transport</keyword>
<keyword id="KW-0946">Virion</keyword>
<sequence>MAEEFVQQRLANNKVTIFVKYTCPFCRNALDILNKFSFKRGAYEIVDIKEFKPENELRDYFEQITGGRTVPRIFFGKTSIGGYSDLLEIDNMDALGDILSSIGVLRTC</sequence>
<gene>
    <name type="primary">OPG075</name>
    <name type="ordered locus">RPXV058</name>
</gene>
<feature type="chain" id="PRO_0000141625" description="Glutaredoxin-1">
    <location>
        <begin position="1"/>
        <end position="108"/>
    </location>
</feature>
<feature type="domain" description="Glutaredoxin" evidence="3">
    <location>
        <begin position="3"/>
        <end position="106"/>
    </location>
</feature>
<feature type="disulfide bond" description="Redox-active" evidence="2">
    <location>
        <begin position="23"/>
        <end position="26"/>
    </location>
</feature>
<reference key="1">
    <citation type="journal article" date="2005" name="J. Gen. Virol.">
        <title>Complete coding sequences of the rabbitpox virus genome.</title>
        <authorList>
            <person name="Li G."/>
            <person name="Chen N."/>
            <person name="Roper R.L."/>
            <person name="Feng Z."/>
            <person name="Hunter A.L."/>
            <person name="Danila M."/>
            <person name="Lefkowitz E.J."/>
            <person name="Buller R.M.L."/>
            <person name="Upton C."/>
        </authorList>
    </citation>
    <scope>NUCLEOTIDE SEQUENCE [LARGE SCALE GENOMIC DNA]</scope>
</reference>
<organismHost>
    <name type="scientific">Oryctolagus cuniculus</name>
    <name type="common">Rabbit</name>
    <dbReference type="NCBI Taxonomy" id="9986"/>
</organismHost>
<dbReference type="EMBL" id="AY484669">
    <property type="protein sequence ID" value="AAS49771.1"/>
    <property type="molecule type" value="Genomic_DNA"/>
</dbReference>
<dbReference type="BMRB" id="Q6RZN3"/>
<dbReference type="SMR" id="Q6RZN3"/>
<dbReference type="Proteomes" id="UP000166173">
    <property type="component" value="Segment"/>
</dbReference>
<dbReference type="GO" id="GO:0044423">
    <property type="term" value="C:virion component"/>
    <property type="evidence" value="ECO:0007669"/>
    <property type="project" value="UniProtKB-KW"/>
</dbReference>
<dbReference type="GO" id="GO:0015038">
    <property type="term" value="F:glutathione disulfide oxidoreductase activity"/>
    <property type="evidence" value="ECO:0007669"/>
    <property type="project" value="TreeGrafter"/>
</dbReference>
<dbReference type="Gene3D" id="3.40.30.10">
    <property type="entry name" value="Glutaredoxin"/>
    <property type="match status" value="1"/>
</dbReference>
<dbReference type="InterPro" id="IPR011767">
    <property type="entry name" value="GLR_AS"/>
</dbReference>
<dbReference type="InterPro" id="IPR047185">
    <property type="entry name" value="GLRX1"/>
</dbReference>
<dbReference type="InterPro" id="IPR002109">
    <property type="entry name" value="Glutaredoxin"/>
</dbReference>
<dbReference type="InterPro" id="IPR011899">
    <property type="entry name" value="Glutaredoxin_euk/vir"/>
</dbReference>
<dbReference type="InterPro" id="IPR014025">
    <property type="entry name" value="Glutaredoxin_subgr"/>
</dbReference>
<dbReference type="InterPro" id="IPR036249">
    <property type="entry name" value="Thioredoxin-like_sf"/>
</dbReference>
<dbReference type="NCBIfam" id="TIGR02180">
    <property type="entry name" value="GRX_euk"/>
    <property type="match status" value="1"/>
</dbReference>
<dbReference type="PANTHER" id="PTHR46185">
    <property type="entry name" value="GLUTAREDOXIN-1"/>
    <property type="match status" value="1"/>
</dbReference>
<dbReference type="PANTHER" id="PTHR46185:SF1">
    <property type="entry name" value="GLUTAREDOXIN-1"/>
    <property type="match status" value="1"/>
</dbReference>
<dbReference type="Pfam" id="PF00462">
    <property type="entry name" value="Glutaredoxin"/>
    <property type="match status" value="1"/>
</dbReference>
<dbReference type="PRINTS" id="PR00160">
    <property type="entry name" value="GLUTAREDOXIN"/>
</dbReference>
<dbReference type="SUPFAM" id="SSF52833">
    <property type="entry name" value="Thioredoxin-like"/>
    <property type="match status" value="1"/>
</dbReference>
<dbReference type="PROSITE" id="PS00195">
    <property type="entry name" value="GLUTAREDOXIN_1"/>
    <property type="match status" value="1"/>
</dbReference>
<dbReference type="PROSITE" id="PS51354">
    <property type="entry name" value="GLUTAREDOXIN_2"/>
    <property type="match status" value="1"/>
</dbReference>
<protein>
    <recommendedName>
        <fullName>Glutaredoxin-1</fullName>
    </recommendedName>
</protein>
<accession>Q6RZN3</accession>
<evidence type="ECO:0000250" key="1"/>
<evidence type="ECO:0000250" key="2">
    <source>
        <dbReference type="UniProtKB" id="P68692"/>
    </source>
</evidence>
<evidence type="ECO:0000255" key="3">
    <source>
        <dbReference type="PROSITE-ProRule" id="PRU00686"/>
    </source>
</evidence>
<evidence type="ECO:0000305" key="4"/>
<organism>
    <name type="scientific">Rabbitpox virus (strain Utrecht)</name>
    <name type="common">RPV</name>
    <dbReference type="NCBI Taxonomy" id="45417"/>
    <lineage>
        <taxon>Viruses</taxon>
        <taxon>Varidnaviria</taxon>
        <taxon>Bamfordvirae</taxon>
        <taxon>Nucleocytoviricota</taxon>
        <taxon>Pokkesviricetes</taxon>
        <taxon>Chitovirales</taxon>
        <taxon>Poxviridae</taxon>
        <taxon>Chordopoxvirinae</taxon>
        <taxon>Orthopoxvirus</taxon>
        <taxon>Vaccinia virus</taxon>
    </lineage>
</organism>
<comment type="function">
    <text evidence="1">Has thioltransferase and dehydroascorbate reductase activities.</text>
</comment>
<comment type="subcellular location">
    <subcellularLocation>
        <location>Virion</location>
    </subcellularLocation>
    <text evidence="1">Localizes to the virion core.</text>
</comment>
<comment type="induction">
    <text evidence="2">Expressed in the intermediate phase of the viral replicative cycle.</text>
</comment>
<comment type="similarity">
    <text evidence="4">Belongs to the glutaredoxin family.</text>
</comment>
<name>GLRX1_RABPU</name>